<organism>
    <name type="scientific">Streptococcus pyogenes serotype M1</name>
    <dbReference type="NCBI Taxonomy" id="301447"/>
    <lineage>
        <taxon>Bacteria</taxon>
        <taxon>Bacillati</taxon>
        <taxon>Bacillota</taxon>
        <taxon>Bacilli</taxon>
        <taxon>Lactobacillales</taxon>
        <taxon>Streptococcaceae</taxon>
        <taxon>Streptococcus</taxon>
    </lineage>
</organism>
<reference key="1">
    <citation type="journal article" date="2001" name="Proc. Natl. Acad. Sci. U.S.A.">
        <title>Complete genome sequence of an M1 strain of Streptococcus pyogenes.</title>
        <authorList>
            <person name="Ferretti J.J."/>
            <person name="McShan W.M."/>
            <person name="Ajdic D.J."/>
            <person name="Savic D.J."/>
            <person name="Savic G."/>
            <person name="Lyon K."/>
            <person name="Primeaux C."/>
            <person name="Sezate S."/>
            <person name="Suvorov A.N."/>
            <person name="Kenton S."/>
            <person name="Lai H.S."/>
            <person name="Lin S.P."/>
            <person name="Qian Y."/>
            <person name="Jia H.G."/>
            <person name="Najar F.Z."/>
            <person name="Ren Q."/>
            <person name="Zhu H."/>
            <person name="Song L."/>
            <person name="White J."/>
            <person name="Yuan X."/>
            <person name="Clifton S.W."/>
            <person name="Roe B.A."/>
            <person name="McLaughlin R.E."/>
        </authorList>
    </citation>
    <scope>NUCLEOTIDE SEQUENCE [LARGE SCALE GENOMIC DNA]</scope>
    <source>
        <strain>ATCC 700294 / SF370 / Serotype M1</strain>
    </source>
</reference>
<reference key="2">
    <citation type="journal article" date="2011" name="Nature">
        <title>CRISPR RNA maturation by trans-encoded small RNA and host factor RNase III.</title>
        <authorList>
            <person name="Deltcheva E."/>
            <person name="Chylinski K."/>
            <person name="Sharma C.M."/>
            <person name="Gonzales K."/>
            <person name="Chao Y."/>
            <person name="Pirzada Z.A."/>
            <person name="Eckert M.R."/>
            <person name="Vogel J."/>
            <person name="Charpentier E."/>
        </authorList>
    </citation>
    <scope>FUNCTION IN CRISPR-MEDIATED PLASMID DEFENSE</scope>
    <scope>DISRUPTION PHENOTYPE</scope>
    <source>
        <strain>ATCC 700294 / SF370 / Serotype M1</strain>
    </source>
</reference>
<reference key="3">
    <citation type="journal article" date="2012" name="Science">
        <title>A programmable dual-RNA-guided DNA endonuclease in adaptive bacterial immunity.</title>
        <authorList>
            <person name="Jinek M."/>
            <person name="Chylinski K."/>
            <person name="Fonfara I."/>
            <person name="Hauer M."/>
            <person name="Doudna J.A."/>
            <person name="Charpentier E."/>
        </authorList>
    </citation>
    <scope>FUNCTION AS A DNA ENDONUCLEASE</scope>
    <scope>FUNCTION AS AN EXONUCLEASE</scope>
    <scope>COFACTOR</scope>
    <scope>ACTIVITY REGULATION</scope>
    <scope>DNA-BINDING</scope>
    <scope>POSSIBLE BIOTECHNOLOGY</scope>
    <scope>MUTAGENESIS OF ASP-10 AND HIS-840</scope>
    <source>
        <strain>ATCC 700294 / SF370 / Serotype M1</strain>
    </source>
</reference>
<reference key="4">
    <citation type="journal article" date="2013" name="Science">
        <title>Multiplex genome engineering using CRISPR/Cas systems.</title>
        <authorList>
            <person name="Cong L."/>
            <person name="Ran F.A."/>
            <person name="Cox D."/>
            <person name="Lin S."/>
            <person name="Barretto R."/>
            <person name="Habib N."/>
            <person name="Hsu P.D."/>
            <person name="Wu X."/>
            <person name="Jiang W."/>
            <person name="Marraffini L.A."/>
            <person name="Zhang F."/>
        </authorList>
    </citation>
    <scope>BIOTECHNOLOGY IN HUMAN AND MOUSE CELLS</scope>
    <source>
        <strain>ATCC 700294 / SF370 / Serotype M1</strain>
    </source>
</reference>
<reference key="5">
    <citation type="journal article" date="2013" name="Science">
        <title>RNA-guided human genome engineering via Cas9.</title>
        <authorList>
            <person name="Mali P."/>
            <person name="Yang L."/>
            <person name="Esvelt K.M."/>
            <person name="Aach J."/>
            <person name="Guell M."/>
            <person name="Dicarlo J.E."/>
            <person name="Norville J.E."/>
            <person name="Church G.M."/>
        </authorList>
    </citation>
    <scope>BIOTECHNOLOGY IN HUMAN CELLS</scope>
</reference>
<reference key="6">
    <citation type="journal article" date="2013" name="Nat. Biotechnol.">
        <title>Efficient genome editing in zebrafish using a CRISPR-Cas system.</title>
        <authorList>
            <person name="Hwang W.Y."/>
            <person name="Fu Y."/>
            <person name="Reyon D."/>
            <person name="Maeder M.L."/>
            <person name="Tsai S.Q."/>
            <person name="Sander J.D."/>
            <person name="Peterson R.T."/>
            <person name="Yeh J.R."/>
            <person name="Joung J.K."/>
        </authorList>
    </citation>
    <scope>BIOTECHNOLOGY IN ZEBRAFISH EMBRYOS</scope>
</reference>
<reference key="7">
    <citation type="journal article" date="2013" name="Nat. Biotechnol.">
        <title>RNA-guided editing of bacterial genomes using CRISPR-Cas systems.</title>
        <authorList>
            <person name="Jiang W."/>
            <person name="Bikard D."/>
            <person name="Cox D."/>
            <person name="Zhang F."/>
            <person name="Marraffini L.A."/>
        </authorList>
    </citation>
    <scope>BIOTECHNOLOGY IN BACTERIA</scope>
    <scope>MUTAGENESIS OF GLY-1132</scope>
    <source>
        <strain>ATCC 700294 / SF370 / Serotype M1</strain>
    </source>
</reference>
<reference key="8">
    <citation type="journal article" date="2013" name="Nat. Biotechnol.">
        <title>Targeted genome engineering in human cells with the Cas9 RNA-guided endonuclease.</title>
        <authorList>
            <person name="Cho S.W."/>
            <person name="Kim S."/>
            <person name="Kim J.M."/>
            <person name="Kim J.S."/>
        </authorList>
    </citation>
    <scope>BIOTECHNOLOGY IN HUMAN CELLS</scope>
    <source>
        <strain>ATCC 700294 / SF370 / Serotype M1</strain>
    </source>
</reference>
<reference key="9">
    <citation type="journal article" date="2013" name="Elife">
        <title>RNA-programmed genome editing in human cells.</title>
        <authorList>
            <person name="Jinek M."/>
            <person name="East A."/>
            <person name="Cheng A."/>
            <person name="Lin S."/>
            <person name="Ma E."/>
            <person name="Doudna J."/>
        </authorList>
    </citation>
    <scope>BIOTECHNOLOGY IN HUMAN CELLS</scope>
</reference>
<reference key="10">
    <citation type="journal article" date="2014" name="Nature">
        <title>DNA interrogation by the CRISPR RNA-guided endonuclease Cas9.</title>
        <authorList>
            <person name="Sternberg S.H."/>
            <person name="Redding S."/>
            <person name="Jinek M."/>
            <person name="Greene E.C."/>
            <person name="Doudna J.A."/>
        </authorList>
    </citation>
    <scope>FUNCTION</scope>
    <scope>ACTIVITY REGULATION</scope>
    <scope>IMPORTANCE OF PAM SEQUENCES</scope>
</reference>
<reference key="11">
    <citation type="journal article" date="2014" name="Nucleic Acids Res.">
        <title>Phylogeny of Cas9 determines functional exchangeability of dual-RNA and Cas9 among orthologous type II CRISPR-Cas systems.</title>
        <authorList>
            <person name="Fonfara I."/>
            <person name="Le Rhun A."/>
            <person name="Chylinski K."/>
            <person name="Makarova K.S."/>
            <person name="Lecrivain A.L."/>
            <person name="Bzdrenga J."/>
            <person name="Koonin E.V."/>
            <person name="Charpentier E."/>
        </authorList>
    </citation>
    <scope>FUNCTION IN CRISPR-MEDIATED PLASMID DEFENSE</scope>
    <scope>FUNCTION AS AN ENDONUCLEASE</scope>
    <scope>MUTAGENESIS OF ASP-10; GLU-762; HIS-840; ASN-854; ASN-863; 982-HIS-HIS-983 AND ASP-986</scope>
    <source>
        <strain>ATCC 700294 / SF370 / Serotype M1</strain>
    </source>
</reference>
<reference key="12">
    <citation type="journal article" date="2015" name="Nature">
        <title>Engineered CRISPR-Cas9 nucleases with altered PAM specificities.</title>
        <authorList>
            <person name="Kleinstiver B.P."/>
            <person name="Prew M.S."/>
            <person name="Tsai S.Q."/>
            <person name="Topkar V.V."/>
            <person name="Nguyen N.T."/>
            <person name="Zheng Z."/>
            <person name="Gonzales A.P."/>
            <person name="Li Z."/>
            <person name="Peterson R.T."/>
            <person name="Yeh J.R."/>
            <person name="Aryee M.J."/>
            <person name="Joung J.K."/>
        </authorList>
    </citation>
    <scope>RE-ENGINEERING</scope>
    <scope>BIOTECHNOLOGY</scope>
</reference>
<reference key="13">
    <citation type="journal article" date="2023" name="Nat. Commun.">
        <title>Assessing and advancing the safety of CRISPR-Cas tools: from DNA to RNA editing.</title>
        <authorList>
            <person name="Tao J."/>
            <person name="Bauer D.E."/>
            <person name="Chiarle R."/>
        </authorList>
    </citation>
    <scope>REVIEW ON SAFETY OF GENOME EDITING TOOLS</scope>
</reference>
<reference key="14">
    <citation type="journal article" date="2014" name="Science">
        <title>Structures of Cas9 endonucleases reveal RNA-mediated conformational activation.</title>
        <authorList>
            <person name="Jinek M."/>
            <person name="Jiang F."/>
            <person name="Taylor D.W."/>
            <person name="Sternberg S.H."/>
            <person name="Kaya E."/>
            <person name="Ma E."/>
            <person name="Anders C."/>
            <person name="Hauer M."/>
            <person name="Zhou K."/>
            <person name="Lin S."/>
            <person name="Kaplan M."/>
            <person name="Iavarone A.T."/>
            <person name="Charpentier E."/>
            <person name="Nogales E."/>
            <person name="Doudna J.A."/>
        </authorList>
    </citation>
    <scope>X-RAY CRYSTALLOGRAPHY (2.62 ANGSTROMS) IN COMPLEX WITH MANGANESE</scope>
    <scope>STRUCTURE BY ELECTRON MICROSCOPY IN COMPLEX WITH SGRNA AND TARGET DNA OR SGRNA ALONE</scope>
    <scope>FUNCTION</scope>
    <scope>COFACTOR</scope>
    <scope>ACTIVITY REGULATION</scope>
    <scope>SUBUNIT</scope>
    <scope>DOMAIN</scope>
    <scope>DNA-BINDING</scope>
    <scope>MUTAGENESIS OF 475-PRO--ASN-477 AND 1125-ASP--ASP-1127</scope>
    <source>
        <strain>ATCC 700294 / SF370 / Serotype M1</strain>
    </source>
</reference>
<reference key="15">
    <citation type="journal article" date="2014" name="Cell">
        <title>Crystal structure of Cas9 in complex with guide RNA and target DNA.</title>
        <authorList>
            <person name="Nishimasu H."/>
            <person name="Ran F.A."/>
            <person name="Hsu P.D."/>
            <person name="Konermann S."/>
            <person name="Shehata S.I."/>
            <person name="Dohmae N."/>
            <person name="Ishitani R."/>
            <person name="Zhang F."/>
            <person name="Nureki O."/>
        </authorList>
    </citation>
    <scope>X-RAY CRYSTALLOGRAPHY (2.5 ANGSTROMS) IN COMPLEX WITH SSGRNA AND SINGLE-STRAND TARGET DNA</scope>
    <scope>FUNCTION</scope>
    <scope>SUBUNIT</scope>
    <scope>DOMAIN</scope>
    <scope>DNA-BINDING</scope>
    <scope>RNA-BINDING</scope>
    <scope>MUTAGENESIS OF ASP-10; SER-15; ARG-66; ARG-70; ARG-74; ARG-78; 97-PHE--ASP-150; ARG-165; 175-ASN--ARG-307; 312-ILE--SER-409; GLU-762; HIS-840; ASN-854; ASN-863; HIS-982; HIS-983; ASP-986 AND 1099-GLU--ASP-1368</scope>
</reference>
<reference key="16">
    <citation type="journal article" date="2014" name="Nature">
        <title>Structural basis of PAM-dependent target DNA recognition by the Cas9 endonuclease.</title>
        <authorList>
            <person name="Anders C."/>
            <person name="Niewoehner O."/>
            <person name="Duerst A."/>
            <person name="Jinek M."/>
        </authorList>
    </citation>
    <scope>X-RAY CRYSTALLOGRAPHY (2.37 ANGSTROMS) IN COMPLEX WITH MAGNESIUM AND WITH SGRNAS AND SINGLE-STRAND TARGET DNA</scope>
    <scope>MUTAGENESIS OF HIS-840; 1333-ARG--ARG-1335; ARG-1333 AND ARG-1335</scope>
    <scope>DNA-BINDING</scope>
    <scope>RNA-BINDING</scope>
</reference>
<reference key="17">
    <citation type="journal article" date="2015" name="Science">
        <title>A Cas9-guide RNA complex preorganized for target DNA recognition.</title>
        <authorList>
            <person name="Jiang F."/>
            <person name="Zhou K."/>
            <person name="Ma L."/>
            <person name="Gressel S."/>
            <person name="Doudna J.A."/>
        </authorList>
    </citation>
    <scope>X-RAY CRYSTALLOGRAPHY (2.90 ANGSTROMS) OF ACTIVE OR INACTIVE ENZYME IN COMPLEX WITH SGRNA</scope>
    <scope>DOMAIN</scope>
    <scope>RNA-BINDING</scope>
</reference>
<reference key="18">
    <citation type="journal article" date="2016" name="Science">
        <title>Structures of a CRISPR-Cas9 R-loop complex primed for DNA cleavage.</title>
        <authorList>
            <person name="Jiang F."/>
            <person name="Taylor D.W."/>
            <person name="Chen J.S."/>
            <person name="Kornfeld J.E."/>
            <person name="Zhou K."/>
            <person name="Thompson A.J."/>
            <person name="Nogales E."/>
            <person name="Doudna J.A."/>
        </authorList>
    </citation>
    <scope>X-RAY CRYSTALLOGRAPHY (3.40 ANGSTROMS) IN COMPLEX WITH SGRNA AND DOUBLE-STRAND TARGET DNA</scope>
    <scope>STRUCTURE BY ELECTRON MICROSCOPY IN COMPLEX WITH SGRNA WITH AND WITHOUT DOUBLE-STRAND TARGET DNA</scope>
    <scope>ACTIVITY REGULATION</scope>
    <scope>DOMAIN</scope>
</reference>
<dbReference type="EC" id="3.1.-.-" evidence="1"/>
<dbReference type="EMBL" id="AE004092">
    <property type="protein sequence ID" value="AAK33936.1"/>
    <property type="molecule type" value="Genomic_DNA"/>
</dbReference>
<dbReference type="RefSeq" id="NP_269215.1">
    <property type="nucleotide sequence ID" value="NC_002737.2"/>
</dbReference>
<dbReference type="PDB" id="4CMP">
    <property type="method" value="X-ray"/>
    <property type="resolution" value="2.62 A"/>
    <property type="chains" value="A/B=1-1368"/>
</dbReference>
<dbReference type="PDB" id="4CMQ">
    <property type="method" value="X-ray"/>
    <property type="resolution" value="3.09 A"/>
    <property type="chains" value="A/B=1-1368"/>
</dbReference>
<dbReference type="PDB" id="4OO8">
    <property type="method" value="X-ray"/>
    <property type="resolution" value="2.50 A"/>
    <property type="chains" value="A/D=1-1368"/>
</dbReference>
<dbReference type="PDB" id="4UN3">
    <property type="method" value="X-ray"/>
    <property type="resolution" value="2.59 A"/>
    <property type="chains" value="B=1-1368"/>
</dbReference>
<dbReference type="PDB" id="4UN4">
    <property type="method" value="X-ray"/>
    <property type="resolution" value="2.37 A"/>
    <property type="chains" value="B=1-1368"/>
</dbReference>
<dbReference type="PDB" id="4UN5">
    <property type="method" value="X-ray"/>
    <property type="resolution" value="2.40 A"/>
    <property type="chains" value="B=1-1368"/>
</dbReference>
<dbReference type="PDB" id="4ZT0">
    <property type="method" value="X-ray"/>
    <property type="resolution" value="2.90 A"/>
    <property type="chains" value="A/C=1-1368"/>
</dbReference>
<dbReference type="PDB" id="4ZT9">
    <property type="method" value="X-ray"/>
    <property type="resolution" value="3.10 A"/>
    <property type="chains" value="A/C=1-1368"/>
</dbReference>
<dbReference type="PDB" id="5B2R">
    <property type="method" value="X-ray"/>
    <property type="resolution" value="2.00 A"/>
    <property type="chains" value="B=1-1368"/>
</dbReference>
<dbReference type="PDB" id="5B2S">
    <property type="method" value="X-ray"/>
    <property type="resolution" value="2.20 A"/>
    <property type="chains" value="B=1-1368"/>
</dbReference>
<dbReference type="PDB" id="5B2T">
    <property type="method" value="X-ray"/>
    <property type="resolution" value="2.20 A"/>
    <property type="chains" value="B=1-1368"/>
</dbReference>
<dbReference type="PDB" id="5F9R">
    <property type="method" value="X-ray"/>
    <property type="resolution" value="3.40 A"/>
    <property type="chains" value="B=1-1368"/>
</dbReference>
<dbReference type="PDB" id="5FQ5">
    <property type="method" value="X-ray"/>
    <property type="resolution" value="2.14 A"/>
    <property type="chains" value="B=1-1368"/>
</dbReference>
<dbReference type="PDB" id="5FW1">
    <property type="method" value="X-ray"/>
    <property type="resolution" value="2.50 A"/>
    <property type="chains" value="B=1-1368"/>
</dbReference>
<dbReference type="PDB" id="5FW2">
    <property type="method" value="X-ray"/>
    <property type="resolution" value="2.68 A"/>
    <property type="chains" value="B=1-1368"/>
</dbReference>
<dbReference type="PDB" id="5FW3">
    <property type="method" value="X-ray"/>
    <property type="resolution" value="2.70 A"/>
    <property type="chains" value="B=1-1368"/>
</dbReference>
<dbReference type="PDB" id="5VW1">
    <property type="method" value="X-ray"/>
    <property type="resolution" value="2.60 A"/>
    <property type="chains" value="A=1-1368"/>
</dbReference>
<dbReference type="PDB" id="5VZL">
    <property type="method" value="EM"/>
    <property type="resolution" value="3.90 A"/>
    <property type="chains" value="A=1-1368"/>
</dbReference>
<dbReference type="PDB" id="5XBL">
    <property type="method" value="X-ray"/>
    <property type="resolution" value="3.05 A"/>
    <property type="chains" value="A=1-1368"/>
</dbReference>
<dbReference type="PDB" id="5Y36">
    <property type="method" value="EM"/>
    <property type="resolution" value="5.20 A"/>
    <property type="chains" value="A=1-1368"/>
</dbReference>
<dbReference type="PDB" id="6AEB">
    <property type="method" value="X-ray"/>
    <property type="resolution" value="3.00 A"/>
    <property type="chains" value="B/F=1-1368"/>
</dbReference>
<dbReference type="PDB" id="6AEG">
    <property type="method" value="X-ray"/>
    <property type="resolution" value="2.70 A"/>
    <property type="chains" value="B=1-1368"/>
</dbReference>
<dbReference type="PDB" id="6AI6">
    <property type="method" value="X-ray"/>
    <property type="resolution" value="2.70 A"/>
    <property type="chains" value="A=1-1368"/>
</dbReference>
<dbReference type="PDB" id="6IFO">
    <property type="method" value="X-ray"/>
    <property type="resolution" value="3.31 A"/>
    <property type="chains" value="A/B=1-1368"/>
</dbReference>
<dbReference type="PDB" id="6K3Z">
    <property type="method" value="X-ray"/>
    <property type="resolution" value="3.20 A"/>
    <property type="chains" value="B=1-1368"/>
</dbReference>
<dbReference type="PDB" id="6K4P">
    <property type="method" value="X-ray"/>
    <property type="resolution" value="2.90 A"/>
    <property type="chains" value="B=1-1368"/>
</dbReference>
<dbReference type="PDB" id="6K4Q">
    <property type="method" value="X-ray"/>
    <property type="resolution" value="2.70 A"/>
    <property type="chains" value="B=1-1368"/>
</dbReference>
<dbReference type="PDB" id="6K4S">
    <property type="method" value="X-ray"/>
    <property type="resolution" value="3.01 A"/>
    <property type="chains" value="B=1-1368"/>
</dbReference>
<dbReference type="PDB" id="6K4U">
    <property type="method" value="X-ray"/>
    <property type="resolution" value="3.20 A"/>
    <property type="chains" value="B=1-1368"/>
</dbReference>
<dbReference type="PDB" id="6K57">
    <property type="method" value="X-ray"/>
    <property type="resolution" value="2.98 A"/>
    <property type="chains" value="B=1-1368"/>
</dbReference>
<dbReference type="PDB" id="6O0X">
    <property type="method" value="EM"/>
    <property type="resolution" value="3.28 A"/>
    <property type="chains" value="A=1-1368"/>
</dbReference>
<dbReference type="PDB" id="6O0Y">
    <property type="method" value="EM"/>
    <property type="resolution" value="3.37 A"/>
    <property type="chains" value="A=1-1368"/>
</dbReference>
<dbReference type="PDB" id="6O0Z">
    <property type="method" value="EM"/>
    <property type="resolution" value="3.30 A"/>
    <property type="chains" value="A=1-1368"/>
</dbReference>
<dbReference type="PDB" id="6O56">
    <property type="method" value="X-ray"/>
    <property type="resolution" value="1.90 A"/>
    <property type="chains" value="A/B=775-908"/>
</dbReference>
<dbReference type="PDB" id="6VPC">
    <property type="method" value="EM"/>
    <property type="resolution" value="3.20 A"/>
    <property type="chains" value="B=4-1364"/>
</dbReference>
<dbReference type="PDB" id="7OX7">
    <property type="method" value="X-ray"/>
    <property type="resolution" value="2.60 A"/>
    <property type="chains" value="B=1-1368"/>
</dbReference>
<dbReference type="PDB" id="7OX8">
    <property type="method" value="X-ray"/>
    <property type="resolution" value="2.75 A"/>
    <property type="chains" value="B=1-1368"/>
</dbReference>
<dbReference type="PDB" id="7OX9">
    <property type="method" value="X-ray"/>
    <property type="resolution" value="2.45 A"/>
    <property type="chains" value="B=1-1368"/>
</dbReference>
<dbReference type="PDB" id="7OXA">
    <property type="method" value="X-ray"/>
    <property type="resolution" value="2.15 A"/>
    <property type="chains" value="B=1-1368"/>
</dbReference>
<dbReference type="PDB" id="7QQO">
    <property type="method" value="X-ray"/>
    <property type="resolution" value="3.00 A"/>
    <property type="chains" value="B=1-1368"/>
</dbReference>
<dbReference type="PDB" id="7QQP">
    <property type="method" value="X-ray"/>
    <property type="resolution" value="2.60 A"/>
    <property type="chains" value="B=1-1368"/>
</dbReference>
<dbReference type="PDB" id="7QQQ">
    <property type="method" value="X-ray"/>
    <property type="resolution" value="2.65 A"/>
    <property type="chains" value="B=1-1368"/>
</dbReference>
<dbReference type="PDB" id="7QQR">
    <property type="method" value="X-ray"/>
    <property type="resolution" value="2.75 A"/>
    <property type="chains" value="B=1-1368"/>
</dbReference>
<dbReference type="PDB" id="7QQS">
    <property type="method" value="X-ray"/>
    <property type="resolution" value="2.40 A"/>
    <property type="chains" value="B=1-1368"/>
</dbReference>
<dbReference type="PDB" id="7QQT">
    <property type="method" value="X-ray"/>
    <property type="resolution" value="2.50 A"/>
    <property type="chains" value="B=1-1368"/>
</dbReference>
<dbReference type="PDB" id="7QQU">
    <property type="method" value="X-ray"/>
    <property type="resolution" value="2.45 A"/>
    <property type="chains" value="B=1-1368"/>
</dbReference>
<dbReference type="PDB" id="7QQV">
    <property type="method" value="X-ray"/>
    <property type="resolution" value="2.25 A"/>
    <property type="chains" value="B=1-1368"/>
</dbReference>
<dbReference type="PDB" id="7QQW">
    <property type="method" value="X-ray"/>
    <property type="resolution" value="3.10 A"/>
    <property type="chains" value="B=1-1368"/>
</dbReference>
<dbReference type="PDB" id="7QQX">
    <property type="method" value="X-ray"/>
    <property type="resolution" value="2.40 A"/>
    <property type="chains" value="B=1-1368"/>
</dbReference>
<dbReference type="PDB" id="7QQZ">
    <property type="method" value="X-ray"/>
    <property type="resolution" value="2.25 A"/>
    <property type="chains" value="B=1-1368"/>
</dbReference>
<dbReference type="PDB" id="7QR0">
    <property type="method" value="X-ray"/>
    <property type="resolution" value="2.30 A"/>
    <property type="chains" value="B=1-1368"/>
</dbReference>
<dbReference type="PDB" id="7QR1">
    <property type="method" value="X-ray"/>
    <property type="resolution" value="2.60 A"/>
    <property type="chains" value="B=1-1368"/>
</dbReference>
<dbReference type="PDB" id="7QR5">
    <property type="method" value="X-ray"/>
    <property type="resolution" value="3.30 A"/>
    <property type="chains" value="B=1-1368"/>
</dbReference>
<dbReference type="PDB" id="7QR7">
    <property type="method" value="X-ray"/>
    <property type="resolution" value="3.00 A"/>
    <property type="chains" value="B=1-1368"/>
</dbReference>
<dbReference type="PDB" id="7QR8">
    <property type="method" value="X-ray"/>
    <property type="resolution" value="2.75 A"/>
    <property type="chains" value="B=1-1368"/>
</dbReference>
<dbReference type="PDB" id="7S36">
    <property type="method" value="EM"/>
    <property type="resolution" value="3.20 A"/>
    <property type="chains" value="P=1-1368"/>
</dbReference>
<dbReference type="PDB" id="7S37">
    <property type="method" value="EM"/>
    <property type="resolution" value="3.20 A"/>
    <property type="chains" value="P=1-1368"/>
</dbReference>
<dbReference type="PDB" id="7S38">
    <property type="method" value="EM"/>
    <property type="resolution" value="3.30 A"/>
    <property type="chains" value="P=1-1368"/>
</dbReference>
<dbReference type="PDB" id="7S3H">
    <property type="method" value="EM"/>
    <property type="resolution" value="2.50 A"/>
    <property type="chains" value="P=1-1368"/>
</dbReference>
<dbReference type="PDB" id="7S4U">
    <property type="method" value="EM"/>
    <property type="resolution" value="3.56 A"/>
    <property type="chains" value="A=1-1368"/>
</dbReference>
<dbReference type="PDB" id="7S4V">
    <property type="method" value="EM"/>
    <property type="resolution" value="3.28 A"/>
    <property type="chains" value="A=1-1368"/>
</dbReference>
<dbReference type="PDB" id="7S4X">
    <property type="method" value="EM"/>
    <property type="resolution" value="2.76 A"/>
    <property type="chains" value="A=1-1368"/>
</dbReference>
<dbReference type="PDB" id="7V59">
    <property type="method" value="EM"/>
    <property type="resolution" value="5.26 A"/>
    <property type="chains" value="B/E=3-1364"/>
</dbReference>
<dbReference type="PDB" id="7VK9">
    <property type="method" value="X-ray"/>
    <property type="resolution" value="2.90 A"/>
    <property type="chains" value="A=1-1368"/>
</dbReference>
<dbReference type="PDB" id="7Z4C">
    <property type="method" value="EM"/>
    <property type="resolution" value="3.87 A"/>
    <property type="chains" value="B=1-1368"/>
</dbReference>
<dbReference type="PDB" id="7Z4D">
    <property type="method" value="X-ray"/>
    <property type="resolution" value="3.10 A"/>
    <property type="chains" value="B/E=1-1368"/>
</dbReference>
<dbReference type="PDB" id="7Z4E">
    <property type="method" value="EM"/>
    <property type="resolution" value="4.14 A"/>
    <property type="chains" value="B=1-1368"/>
</dbReference>
<dbReference type="PDB" id="7Z4G">
    <property type="method" value="EM"/>
    <property type="resolution" value="3.64 A"/>
    <property type="chains" value="B=1-1368"/>
</dbReference>
<dbReference type="PDB" id="7Z4H">
    <property type="method" value="EM"/>
    <property type="resolution" value="3.49 A"/>
    <property type="chains" value="B=1-1368"/>
</dbReference>
<dbReference type="PDB" id="7Z4I">
    <property type="method" value="EM"/>
    <property type="resolution" value="3.12 A"/>
    <property type="chains" value="B=1-1368"/>
</dbReference>
<dbReference type="PDB" id="7Z4J">
    <property type="method" value="EM"/>
    <property type="resolution" value="2.99 A"/>
    <property type="chains" value="B=1-1368"/>
</dbReference>
<dbReference type="PDB" id="7Z4K">
    <property type="method" value="EM"/>
    <property type="resolution" value="3.81 A"/>
    <property type="chains" value="B=1-1368"/>
</dbReference>
<dbReference type="PDB" id="7Z4L">
    <property type="method" value="EM"/>
    <property type="resolution" value="2.54 A"/>
    <property type="chains" value="B=1-1368"/>
</dbReference>
<dbReference type="PDB" id="7ZO1">
    <property type="method" value="X-ray"/>
    <property type="resolution" value="2.40 A"/>
    <property type="chains" value="B=1-1368"/>
</dbReference>
<dbReference type="PDB" id="8FZT">
    <property type="method" value="EM"/>
    <property type="resolution" value="3.03 A"/>
    <property type="chains" value="E=1-1368"/>
</dbReference>
<dbReference type="PDB" id="8G1I">
    <property type="method" value="EM"/>
    <property type="resolution" value="3.12 A"/>
    <property type="chains" value="A=1-1368"/>
</dbReference>
<dbReference type="PDB" id="8KAG">
    <property type="method" value="X-ray"/>
    <property type="resolution" value="3.88 A"/>
    <property type="chains" value="B=1-1368"/>
</dbReference>
<dbReference type="PDB" id="8KAH">
    <property type="method" value="X-ray"/>
    <property type="resolution" value="3.36 A"/>
    <property type="chains" value="B/F=1-1368"/>
</dbReference>
<dbReference type="PDB" id="8KAI">
    <property type="method" value="X-ray"/>
    <property type="resolution" value="3.49 A"/>
    <property type="chains" value="B/F=1-1368"/>
</dbReference>
<dbReference type="PDB" id="8KAJ">
    <property type="method" value="X-ray"/>
    <property type="resolution" value="3.42 A"/>
    <property type="chains" value="B/F=1-1368"/>
</dbReference>
<dbReference type="PDB" id="8KAK">
    <property type="method" value="X-ray"/>
    <property type="resolution" value="3.60 A"/>
    <property type="chains" value="B/F=1-1368"/>
</dbReference>
<dbReference type="PDB" id="8KAL">
    <property type="method" value="X-ray"/>
    <property type="resolution" value="3.16 A"/>
    <property type="chains" value="B/G=1-1368"/>
</dbReference>
<dbReference type="PDB" id="8KAM">
    <property type="method" value="X-ray"/>
    <property type="resolution" value="3.91 A"/>
    <property type="chains" value="B=1-1368"/>
</dbReference>
<dbReference type="PDB" id="8SCA">
    <property type="method" value="X-ray"/>
    <property type="resolution" value="1.67 A"/>
    <property type="chains" value="B=497-713"/>
</dbReference>
<dbReference type="PDB" id="8SPQ">
    <property type="method" value="EM"/>
    <property type="resolution" value="3.26 A"/>
    <property type="chains" value="A=2-1368"/>
</dbReference>
<dbReference type="PDB" id="8SQH">
    <property type="method" value="EM"/>
    <property type="resolution" value="3.69 A"/>
    <property type="chains" value="A=2-1368"/>
</dbReference>
<dbReference type="PDB" id="8SRS">
    <property type="method" value="EM"/>
    <property type="resolution" value="2.79 A"/>
    <property type="chains" value="A=2-1368"/>
</dbReference>
<dbReference type="PDB" id="8T6O">
    <property type="method" value="EM"/>
    <property type="resolution" value="3.10 A"/>
    <property type="chains" value="A=2-1368"/>
</dbReference>
<dbReference type="PDB" id="8T6P">
    <property type="method" value="EM"/>
    <property type="resolution" value="3.15 A"/>
    <property type="chains" value="A=2-1368"/>
</dbReference>
<dbReference type="PDB" id="8T6S">
    <property type="method" value="EM"/>
    <property type="resolution" value="3.28 A"/>
    <property type="chains" value="A=2-1368"/>
</dbReference>
<dbReference type="PDB" id="8T6T">
    <property type="method" value="EM"/>
    <property type="resolution" value="3.04 A"/>
    <property type="chains" value="A=2-1368"/>
</dbReference>
<dbReference type="PDB" id="8T6X">
    <property type="method" value="EM"/>
    <property type="resolution" value="3.08 A"/>
    <property type="chains" value="A=2-1368"/>
</dbReference>
<dbReference type="PDB" id="8T6Y">
    <property type="method" value="EM"/>
    <property type="resolution" value="2.88 A"/>
    <property type="chains" value="A=2-1368"/>
</dbReference>
<dbReference type="PDB" id="8T76">
    <property type="method" value="EM"/>
    <property type="resolution" value="3.42 A"/>
    <property type="chains" value="A=2-1368"/>
</dbReference>
<dbReference type="PDB" id="8T77">
    <property type="method" value="EM"/>
    <property type="resolution" value="3.25 A"/>
    <property type="chains" value="A=2-1368"/>
</dbReference>
<dbReference type="PDB" id="8T78">
    <property type="method" value="EM"/>
    <property type="resolution" value="3.02 A"/>
    <property type="chains" value="A=2-1368"/>
</dbReference>
<dbReference type="PDB" id="8T79">
    <property type="method" value="EM"/>
    <property type="resolution" value="3.04 A"/>
    <property type="chains" value="A=3-1366"/>
</dbReference>
<dbReference type="PDB" id="8T7S">
    <property type="method" value="EM"/>
    <property type="resolution" value="3.01 A"/>
    <property type="chains" value="A/G=2-1368"/>
</dbReference>
<dbReference type="PDB" id="8TZZ">
    <property type="method" value="EM"/>
    <property type="resolution" value="3.56 A"/>
    <property type="chains" value="A=2-1367"/>
</dbReference>
<dbReference type="PDB" id="8U3Y">
    <property type="method" value="EM"/>
    <property type="resolution" value="3.10 A"/>
    <property type="chains" value="A=3-1366"/>
</dbReference>
<dbReference type="PDB" id="8WUS">
    <property type="method" value="EM"/>
    <property type="resolution" value="2.90 A"/>
    <property type="chains" value="A=2-1368"/>
</dbReference>
<dbReference type="PDB" id="8WUT">
    <property type="method" value="EM"/>
    <property type="resolution" value="3.00 A"/>
    <property type="chains" value="A=2-1368"/>
</dbReference>
<dbReference type="PDB" id="8WUU">
    <property type="method" value="EM"/>
    <property type="resolution" value="3.20 A"/>
    <property type="chains" value="A=2-1368"/>
</dbReference>
<dbReference type="PDB" id="8WUV">
    <property type="method" value="EM"/>
    <property type="resolution" value="3.00 A"/>
    <property type="chains" value="A=2-1368"/>
</dbReference>
<dbReference type="PDB" id="8YE6">
    <property type="method" value="EM"/>
    <property type="resolution" value="2.95 A"/>
    <property type="chains" value="A=1-1368"/>
</dbReference>
<dbReference type="PDB" id="8YE9">
    <property type="method" value="EM"/>
    <property type="resolution" value="3.43 A"/>
    <property type="chains" value="A=1-1368"/>
</dbReference>
<dbReference type="PDB" id="8YGJ">
    <property type="method" value="EM"/>
    <property type="resolution" value="3.20 A"/>
    <property type="chains" value="A=2-1368"/>
</dbReference>
<dbReference type="PDB" id="8YNY">
    <property type="method" value="EM"/>
    <property type="resolution" value="4.52 A"/>
    <property type="chains" value="X=1-1368"/>
</dbReference>
<dbReference type="PDB" id="9C9P">
    <property type="method" value="EM"/>
    <property type="resolution" value="3.10 A"/>
    <property type="chains" value="A=1-1368"/>
</dbReference>
<dbReference type="PDB" id="9CGU">
    <property type="method" value="EM"/>
    <property type="resolution" value="3.00 A"/>
    <property type="chains" value="A=1-1368"/>
</dbReference>
<dbReference type="PDBsum" id="4CMP"/>
<dbReference type="PDBsum" id="4CMQ"/>
<dbReference type="PDBsum" id="4OO8"/>
<dbReference type="PDBsum" id="4UN3"/>
<dbReference type="PDBsum" id="4UN4"/>
<dbReference type="PDBsum" id="4UN5"/>
<dbReference type="PDBsum" id="4ZT0"/>
<dbReference type="PDBsum" id="4ZT9"/>
<dbReference type="PDBsum" id="5B2R"/>
<dbReference type="PDBsum" id="5B2S"/>
<dbReference type="PDBsum" id="5B2T"/>
<dbReference type="PDBsum" id="5F9R"/>
<dbReference type="PDBsum" id="5FQ5"/>
<dbReference type="PDBsum" id="5FW1"/>
<dbReference type="PDBsum" id="5FW2"/>
<dbReference type="PDBsum" id="5FW3"/>
<dbReference type="PDBsum" id="5VW1"/>
<dbReference type="PDBsum" id="5VZL"/>
<dbReference type="PDBsum" id="5XBL"/>
<dbReference type="PDBsum" id="5Y36"/>
<dbReference type="PDBsum" id="6AEB"/>
<dbReference type="PDBsum" id="6AEG"/>
<dbReference type="PDBsum" id="6AI6"/>
<dbReference type="PDBsum" id="6IFO"/>
<dbReference type="PDBsum" id="6K3Z"/>
<dbReference type="PDBsum" id="6K4P"/>
<dbReference type="PDBsum" id="6K4Q"/>
<dbReference type="PDBsum" id="6K4S"/>
<dbReference type="PDBsum" id="6K4U"/>
<dbReference type="PDBsum" id="6K57"/>
<dbReference type="PDBsum" id="6O0X"/>
<dbReference type="PDBsum" id="6O0Y"/>
<dbReference type="PDBsum" id="6O0Z"/>
<dbReference type="PDBsum" id="6O56"/>
<dbReference type="PDBsum" id="6VPC"/>
<dbReference type="PDBsum" id="7OX7"/>
<dbReference type="PDBsum" id="7OX8"/>
<dbReference type="PDBsum" id="7OX9"/>
<dbReference type="PDBsum" id="7OXA"/>
<dbReference type="PDBsum" id="7QQO"/>
<dbReference type="PDBsum" id="7QQP"/>
<dbReference type="PDBsum" id="7QQQ"/>
<dbReference type="PDBsum" id="7QQR"/>
<dbReference type="PDBsum" id="7QQS"/>
<dbReference type="PDBsum" id="7QQT"/>
<dbReference type="PDBsum" id="7QQU"/>
<dbReference type="PDBsum" id="7QQV"/>
<dbReference type="PDBsum" id="7QQW"/>
<dbReference type="PDBsum" id="7QQX"/>
<dbReference type="PDBsum" id="7QQZ"/>
<dbReference type="PDBsum" id="7QR0"/>
<dbReference type="PDBsum" id="7QR1"/>
<dbReference type="PDBsum" id="7QR5"/>
<dbReference type="PDBsum" id="7QR7"/>
<dbReference type="PDBsum" id="7QR8"/>
<dbReference type="PDBsum" id="7S36"/>
<dbReference type="PDBsum" id="7S37"/>
<dbReference type="PDBsum" id="7S38"/>
<dbReference type="PDBsum" id="7S3H"/>
<dbReference type="PDBsum" id="7S4U"/>
<dbReference type="PDBsum" id="7S4V"/>
<dbReference type="PDBsum" id="7S4X"/>
<dbReference type="PDBsum" id="7V59"/>
<dbReference type="PDBsum" id="7VK9"/>
<dbReference type="PDBsum" id="7Z4C"/>
<dbReference type="PDBsum" id="7Z4D"/>
<dbReference type="PDBsum" id="7Z4E"/>
<dbReference type="PDBsum" id="7Z4G"/>
<dbReference type="PDBsum" id="7Z4H"/>
<dbReference type="PDBsum" id="7Z4I"/>
<dbReference type="PDBsum" id="7Z4J"/>
<dbReference type="PDBsum" id="7Z4K"/>
<dbReference type="PDBsum" id="7Z4L"/>
<dbReference type="PDBsum" id="7ZO1"/>
<dbReference type="PDBsum" id="8FZT"/>
<dbReference type="PDBsum" id="8G1I"/>
<dbReference type="PDBsum" id="8KAG"/>
<dbReference type="PDBsum" id="8KAH"/>
<dbReference type="PDBsum" id="8KAI"/>
<dbReference type="PDBsum" id="8KAJ"/>
<dbReference type="PDBsum" id="8KAK"/>
<dbReference type="PDBsum" id="8KAL"/>
<dbReference type="PDBsum" id="8KAM"/>
<dbReference type="PDBsum" id="8SCA"/>
<dbReference type="PDBsum" id="8SPQ"/>
<dbReference type="PDBsum" id="8SQH"/>
<dbReference type="PDBsum" id="8SRS"/>
<dbReference type="PDBsum" id="8T6O"/>
<dbReference type="PDBsum" id="8T6P"/>
<dbReference type="PDBsum" id="8T6S"/>
<dbReference type="PDBsum" id="8T6T"/>
<dbReference type="PDBsum" id="8T6X"/>
<dbReference type="PDBsum" id="8T6Y"/>
<dbReference type="PDBsum" id="8T76"/>
<dbReference type="PDBsum" id="8T77"/>
<dbReference type="PDBsum" id="8T78"/>
<dbReference type="PDBsum" id="8T79"/>
<dbReference type="PDBsum" id="8T7S"/>
<dbReference type="PDBsum" id="8TZZ"/>
<dbReference type="PDBsum" id="8U3Y"/>
<dbReference type="PDBsum" id="8WUS"/>
<dbReference type="PDBsum" id="8WUT"/>
<dbReference type="PDBsum" id="8WUU"/>
<dbReference type="PDBsum" id="8WUV"/>
<dbReference type="PDBsum" id="8YE6"/>
<dbReference type="PDBsum" id="8YE9"/>
<dbReference type="PDBsum" id="8YGJ"/>
<dbReference type="PDBsum" id="8YNY"/>
<dbReference type="PDBsum" id="9C9P"/>
<dbReference type="PDBsum" id="9CGU"/>
<dbReference type="BMRB" id="Q99ZW2"/>
<dbReference type="EMDB" id="EMD-0583"/>
<dbReference type="EMDB" id="EMD-0584"/>
<dbReference type="EMDB" id="EMD-0585"/>
<dbReference type="EMDB" id="EMD-14493"/>
<dbReference type="EMDB" id="EMD-14494"/>
<dbReference type="EMDB" id="EMD-14496"/>
<dbReference type="EMDB" id="EMD-14497"/>
<dbReference type="EMDB" id="EMD-14498"/>
<dbReference type="EMDB" id="EMD-14499"/>
<dbReference type="EMDB" id="EMD-14500"/>
<dbReference type="EMDB" id="EMD-14501"/>
<dbReference type="EMDB" id="EMD-24817"/>
<dbReference type="EMDB" id="EMD-24818"/>
<dbReference type="EMDB" id="EMD-24819"/>
<dbReference type="EMDB" id="EMD-24823"/>
<dbReference type="EMDB" id="EMD-24833"/>
<dbReference type="EMDB" id="EMD-24835"/>
<dbReference type="EMDB" id="EMD-24838"/>
<dbReference type="EMDB" id="EMD-29639"/>
<dbReference type="EMDB" id="EMD-29671"/>
<dbReference type="EMDB" id="EMD-31721"/>
<dbReference type="EMDB" id="EMD-3276"/>
<dbReference type="EMDB" id="EMD-3277"/>
<dbReference type="EMDB" id="EMD-37858"/>
<dbReference type="EMDB" id="EMD-37859"/>
<dbReference type="EMDB" id="EMD-37860"/>
<dbReference type="EMDB" id="EMD-37861"/>
<dbReference type="EMDB" id="EMD-39190"/>
<dbReference type="EMDB" id="EMD-39191"/>
<dbReference type="EMDB" id="EMD-39253"/>
<dbReference type="EMDB" id="EMD-39431"/>
<dbReference type="EMDB" id="EMD-40681"/>
<dbReference type="EMDB" id="EMD-40705"/>
<dbReference type="EMDB" id="EMD-40740"/>
<dbReference type="EMDB" id="EMD-41073"/>
<dbReference type="EMDB" id="EMD-41074"/>
<dbReference type="EMDB" id="EMD-41079"/>
<dbReference type="EMDB" id="EMD-41080"/>
<dbReference type="EMDB" id="EMD-41083"/>
<dbReference type="EMDB" id="EMD-41084"/>
<dbReference type="EMDB" id="EMD-41085"/>
<dbReference type="EMDB" id="EMD-41086"/>
<dbReference type="EMDB" id="EMD-41087"/>
<dbReference type="EMDB" id="EMD-41088"/>
<dbReference type="EMDB" id="EMD-41093"/>
<dbReference type="EMDB" id="EMD-41775"/>
<dbReference type="EMDB" id="EMD-41867"/>
<dbReference type="EMDB" id="EMD-45368"/>
<dbReference type="EMDB" id="EMD-45586"/>
<dbReference type="EMDB" id="EMD-5858"/>
<dbReference type="EMDB" id="EMD-5859"/>
<dbReference type="EMDB" id="EMD-5860"/>
<dbReference type="SMR" id="Q99ZW2"/>
<dbReference type="DIP" id="DIP-61504N"/>
<dbReference type="IntAct" id="Q99ZW2">
    <property type="interactions" value="5"/>
</dbReference>
<dbReference type="iPTMnet" id="Q99ZW2"/>
<dbReference type="PaxDb" id="1314-HKU360_00834"/>
<dbReference type="KEGG" id="spy:SPy_1046"/>
<dbReference type="PATRIC" id="fig|160490.10.peg.902"/>
<dbReference type="HOGENOM" id="CLU_005604_0_0_9"/>
<dbReference type="OMA" id="TDRHSIK"/>
<dbReference type="EvolutionaryTrace" id="Q99ZW2"/>
<dbReference type="PHI-base" id="PHI:9486"/>
<dbReference type="Proteomes" id="UP000000750">
    <property type="component" value="Chromosome"/>
</dbReference>
<dbReference type="GO" id="GO:0008408">
    <property type="term" value="F:3'-5' exonuclease activity"/>
    <property type="evidence" value="ECO:0000314"/>
    <property type="project" value="UniProtKB"/>
</dbReference>
<dbReference type="GO" id="GO:0003677">
    <property type="term" value="F:DNA binding"/>
    <property type="evidence" value="ECO:0000314"/>
    <property type="project" value="UniProtKB"/>
</dbReference>
<dbReference type="GO" id="GO:0004520">
    <property type="term" value="F:DNA endonuclease activity"/>
    <property type="evidence" value="ECO:0000314"/>
    <property type="project" value="UniProtKB"/>
</dbReference>
<dbReference type="GO" id="GO:0046872">
    <property type="term" value="F:metal ion binding"/>
    <property type="evidence" value="ECO:0007669"/>
    <property type="project" value="UniProtKB-UniRule"/>
</dbReference>
<dbReference type="GO" id="GO:0003723">
    <property type="term" value="F:RNA binding"/>
    <property type="evidence" value="ECO:0007669"/>
    <property type="project" value="UniProtKB-KW"/>
</dbReference>
<dbReference type="GO" id="GO:0051607">
    <property type="term" value="P:defense response to virus"/>
    <property type="evidence" value="ECO:0007669"/>
    <property type="project" value="UniProtKB-UniRule"/>
</dbReference>
<dbReference type="GO" id="GO:0043571">
    <property type="term" value="P:maintenance of CRISPR repeat elements"/>
    <property type="evidence" value="ECO:0000314"/>
    <property type="project" value="UniProtKB"/>
</dbReference>
<dbReference type="CDD" id="cd09643">
    <property type="entry name" value="Csn1"/>
    <property type="match status" value="1"/>
</dbReference>
<dbReference type="Gene3D" id="1.10.30.50">
    <property type="match status" value="1"/>
</dbReference>
<dbReference type="Gene3D" id="3.30.420.10">
    <property type="entry name" value="Ribonuclease H-like superfamily/Ribonuclease H"/>
    <property type="match status" value="1"/>
</dbReference>
<dbReference type="HAMAP" id="MF_01480">
    <property type="entry name" value="Cas9"/>
    <property type="match status" value="1"/>
</dbReference>
<dbReference type="IDEAL" id="IID90040"/>
<dbReference type="InterPro" id="IPR028629">
    <property type="entry name" value="Cas9"/>
</dbReference>
<dbReference type="InterPro" id="IPR032239">
    <property type="entry name" value="Cas9-BH"/>
</dbReference>
<dbReference type="InterPro" id="IPR032237">
    <property type="entry name" value="Cas9_PI"/>
</dbReference>
<dbReference type="InterPro" id="IPR032240">
    <property type="entry name" value="Cas9_REC"/>
</dbReference>
<dbReference type="InterPro" id="IPR055228">
    <property type="entry name" value="Cas9_RuvC"/>
</dbReference>
<dbReference type="InterPro" id="IPR033114">
    <property type="entry name" value="HNH_CAS9"/>
</dbReference>
<dbReference type="InterPro" id="IPR003615">
    <property type="entry name" value="HNH_nuc"/>
</dbReference>
<dbReference type="InterPro" id="IPR036397">
    <property type="entry name" value="RNaseH_sf"/>
</dbReference>
<dbReference type="NCBIfam" id="TIGR01865">
    <property type="entry name" value="cas_Csn1"/>
    <property type="match status" value="1"/>
</dbReference>
<dbReference type="Pfam" id="PF16593">
    <property type="entry name" value="Cas9-BH"/>
    <property type="match status" value="1"/>
</dbReference>
<dbReference type="Pfam" id="PF16595">
    <property type="entry name" value="Cas9_PI"/>
    <property type="match status" value="1"/>
</dbReference>
<dbReference type="Pfam" id="PF16592">
    <property type="entry name" value="Cas9_REC"/>
    <property type="match status" value="1"/>
</dbReference>
<dbReference type="Pfam" id="PF22702">
    <property type="entry name" value="Cas9_RuvC"/>
    <property type="match status" value="1"/>
</dbReference>
<dbReference type="Pfam" id="PF13395">
    <property type="entry name" value="HNH_4"/>
    <property type="match status" value="1"/>
</dbReference>
<dbReference type="PROSITE" id="PS51749">
    <property type="entry name" value="HNH_CAS9"/>
    <property type="match status" value="1"/>
</dbReference>
<name>CAS9_STRP1</name>
<accession>Q99ZW2</accession>
<keyword id="KW-0002">3D-structure</keyword>
<keyword id="KW-0051">Antiviral defense</keyword>
<keyword id="KW-0238">DNA-binding</keyword>
<keyword id="KW-0255">Endonuclease</keyword>
<keyword id="KW-0269">Exonuclease</keyword>
<keyword id="KW-0378">Hydrolase</keyword>
<keyword id="KW-0460">Magnesium</keyword>
<keyword id="KW-0464">Manganese</keyword>
<keyword id="KW-0479">Metal-binding</keyword>
<keyword id="KW-0540">Nuclease</keyword>
<keyword id="KW-1185">Reference proteome</keyword>
<keyword id="KW-0694">RNA-binding</keyword>
<protein>
    <recommendedName>
        <fullName evidence="1">CRISPR-associated endonuclease Cas9/Csn1</fullName>
        <ecNumber evidence="1">3.1.-.-</ecNumber>
    </recommendedName>
    <alternativeName>
        <fullName evidence="21">SpCas9</fullName>
    </alternativeName>
    <alternativeName>
        <fullName evidence="22">SpyCas9</fullName>
    </alternativeName>
</protein>
<gene>
    <name evidence="1 20" type="primary">cas9</name>
    <name evidence="19" type="synonym">csn1</name>
    <name type="ordered locus">SPy_1046</name>
</gene>
<proteinExistence type="evidence at protein level"/>
<comment type="function">
    <text evidence="3 4 11 12 13 14">CRISPR (clustered regularly interspaced short palindromic repeat) is an adaptive immune system that provides protection against mobile genetic elements (viruses, transposable elements and conjugative plasmids) (PubMed:21455174). CRISPR clusters contain spacers, sequences complementary to antecedent mobile elements, and target invading nucleic acids. CRISPR clusters are transcribed and processed into CRISPR RNA (crRNA). In type II CRISPR systems correct processing of pre-crRNA requires a trans-encoded small RNA (tracrRNA), endogenous ribonuclease 3 (rnc) and this protein. The tracrRNA serves as a guide for ribonuclease 3-aided processing of pre-crRNA; Cas9 only stabilizes the pre-crRNA:tracrRNA interaction and has no catalytic function in RNA processing (PubMed:24270795). Subsequently Cas9/crRNA/tracrRNA endonucleolytically cleaves linear or circular dsDNA target complementary to the spacer; Cas9 is inactive in the absence of the 2 guide RNAs (gRNA). The target strand not complementary to crRNA is first cut endonucleolytically, then trimmed 3'-5' exonucleolytically. DNA-binding requires protein and both gRNAs, as does nuclease activity. Cas9 recognizes the protospacer adjacent motif (PAM) in the CRISPR repeat sequences to help distinguish self versus nonself, as targets within the bacterial CRISPR locus do not have PAMs. DNA strand separation and heteroduplex formation starts at PAM sites; PAM recognition is required for catalytic activity (PubMed:24476820). Confers immunity against a plasmid with homology to the appropriate CRISPR spacer sequences (CRISPR interference) (PubMed:21455174).</text>
</comment>
<comment type="cofactor">
    <cofactor evidence="4 13">
        <name>Mg(2+)</name>
        <dbReference type="ChEBI" id="CHEBI:18420"/>
    </cofactor>
    <text evidence="4 13 15">Endonuclease activity on target dsDNA requires Mg(2+) (PubMed:22745249). The RuvC-like nuclease domain should have 2 divalent cations, while the HNH domain should have 1. Crystals are often soaked in MgCl(2) or MnCl(2+).</text>
</comment>
<comment type="activity regulation">
    <text evidence="4 12 13 18">Only has nuclease activity when bound to both gRNAs (crRNA plus tracrRNA), which results in conformational changes in the protein and formation of a central channel which binds target DNA (PubMed:24505130). Also requires interaction with PAM to trigger catalytic activity (PubMed:24476820). Nuclease activity is inhibited by EDTA (PubMed:26841432).</text>
</comment>
<comment type="subunit">
    <text evidence="1 13 14">Monomer. Binds crRNA and tracrRNA.</text>
</comment>
<comment type="domain">
    <text evidence="4 14">Has 2 endonuclease domains. The discontinuous RuvC-like domain (approximately residues 1-62, 718-765 and 925-1102) recognizes and cleaves the target DNA noncomplementary to crRNA while the HNH nuclease domain (residues 810-872) cleaves the target DNA complementary to crRNA (PubMed:22745249, PubMed:24529477).</text>
</comment>
<comment type="domain">
    <text evidence="13 14 17 18">Has a bilobed architecture with a recognition lobe (REC, residues 60-718) and a discontinuous nuclease lobe (NUC, residues 1-59 and 719-1368) (PubMed:24505130, PubMed:24529477). The crRNA-target DNA lies in a channel between the 2 lobes (PubMed:24529477, PubMed:26841432). Binding of sgRNA induces large conformational changes further enhanced by target DNA binding (PubMed:26113724, PubMed:26841432). REC recognizes and binds differing regions of an artificial sgRNA in a sequence-independent manner. Deletions of parts of this lobe abolish nuclease activity (PubMed:24529477).</text>
</comment>
<comment type="domain">
    <text evidence="14">The PAM-interacting domain (PI domain, approximately residues 1099-1368) recognizes the PAM motif; swapping the PI domain of this enzyme with that from S.thermophilus St3Cas9 (AC Q03JI6) prevents cleavage of DNA with the endogenous PAM site (5'-NGG-3') but confers the ability to cleave DNA with the PAM site specific for St3 CRISPRs.</text>
</comment>
<comment type="disruption phenotype">
    <text evidence="3">Loss of correct processing of pre-crRNA and tracrRNA. Loss of immunity against a plasmid with homology to CRISPR spacer sequences.</text>
</comment>
<comment type="biotechnology">
    <text evidence="5 6 7 8 9 10 16">Coexpression of Cas9 with an artificial single guide RNA (sgRNA) which fuses the crRNA with the tracrRNA in human cells has shown it is possible to target and modify DNA sequences of interest (PubMed:23287722, PubMed:23360966, PubMed:23386978). Cas9 plus the 2 sgRNAs have also been expressed individually in human and mouse cells to achieve DNA targeting; cleavage efficiencies of the artificial sgRNA were lower that those for systems with the 2 sgRNAs expressed separately (PubMed:23287718). Microinjection of Cas9-encoding mRNA and a synthetic sgRNA into zebrafish embryos induces targeted mutations (PubMed:23360964). In all cases introduction of multiple sgRNAs leads to multiplexed editing of genomic loci; DNA has also been inserted into a mammalian locus of interest. In S.pneumoniae and E.coli it has been used to generate markerless mutations; multiple changes can be made simultaneously (PubMed:23360965). Studies to make mutations that alter the PAM-specificity and thus recognition possibilities have been made, but are not annotated in this database (PubMed:26098369).</text>
</comment>
<comment type="similarity">
    <text evidence="24">Belongs to the CRISPR-associated protein Cas9 family. Subtype II-A subfamily.</text>
</comment>
<sequence>MDKKYSIGLDIGTNSVGWAVITDEYKVPSKKFKVLGNTDRHSIKKNLIGALLFDSGETAEATRLKRTARRRYTRRKNRICYLQEIFSNEMAKVDDSFFHRLEESFLVEEDKKHERHPIFGNIVDEVAYHEKYPTIYHLRKKLVDSTDKADLRLIYLALAHMIKFRGHFLIEGDLNPDNSDVDKLFIQLVQTYNQLFEENPINASGVDAKAILSARLSKSRRLENLIAQLPGEKKNGLFGNLIALSLGLTPNFKSNFDLAEDAKLQLSKDTYDDDLDNLLAQIGDQYADLFLAAKNLSDAILLSDILRVNTEITKAPLSASMIKRYDEHHQDLTLLKALVRQQLPEKYKEIFFDQSKNGYAGYIDGGASQEEFYKFIKPILEKMDGTEELLVKLNREDLLRKQRTFDNGSIPHQIHLGELHAILRRQEDFYPFLKDNREKIEKILTFRIPYYVGPLARGNSRFAWMTRKSEETITPWNFEEVVDKGASAQSFIERMTNFDKNLPNEKVLPKHSLLYEYFTVYNELTKVKYVTEGMRKPAFLSGEQKKAIVDLLFKTNRKVTVKQLKEDYFKKIECFDSVEISGVEDRFNASLGTYHDLLKIIKDKDFLDNEENEDILEDIVLTLTLFEDREMIEERLKTYAHLFDDKVMKQLKRRRYTGWGRLSRKLINGIRDKQSGKTILDFLKSDGFANRNFMQLIHDDSLTFKEDIQKAQVSGQGDSLHEHIANLAGSPAIKKGILQTVKVVDELVKVMGRHKPENIVIEMARENQTTQKGQKNSRERMKRIEEGIKELGSQILKEHPVENTQLQNEKLYLYYLQNGRDMYVDQELDINRLSDYDVDHIVPQSFLKDDSIDNKVLTRSDKNRGKSDNVPSEEVVKKMKNYWRQLLNAKLITQRKFDNLTKAERGGLSELDKAGFIKRQLVETRQITKHVAQILDSRMNTKYDENDKLIREVKVITLKSKLVSDFRKDFQFYKVREINNYHHAHDAYLNAVVGTALIKKYPKLESEFVYGDYKVYDVRKMIAKSEQEIGKATAKYFFYSNIMNFFKTEITLANGEIRKRPLIETNGETGEIVWDKGRDFATVRKVLSMPQVNIVKKTEVQTGGFSKESILPKRNSDKLIARKKDWDPKKYGGFDSPTVAYSVLVVAKVEKGKSKKLKSVKELLGITIMERSSFEKNPIDFLEAKGYKEVKKDLIIKLPKYSLFELENGRKRMLASAGELQKGNELALPSKYVNFLYLASHYEKLKGSPEDNEQKQLFVEQHKHYLDEIIEQISEFSKRVILADANLDKVLSAYNKHRDKPIREQAENIIHLFTLTNLGAPAAFKYFDTTIDRKRYTSTKEVLDATLIHQSITGLYETRIDLSQLGGD</sequence>
<feature type="chain" id="PRO_0000418437" description="CRISPR-associated endonuclease Cas9/Csn1">
    <location>
        <begin position="1"/>
        <end position="1368"/>
    </location>
</feature>
<feature type="domain" description="HNH Cas9-type" evidence="2">
    <location>
        <begin position="770"/>
        <end position="921"/>
    </location>
</feature>
<feature type="region of interest" description="RuvC-I" evidence="22">
    <location>
        <begin position="1"/>
        <end position="62"/>
    </location>
</feature>
<feature type="region of interest" description="Recognition lobe" evidence="22">
    <location>
        <begin position="56"/>
        <end position="718"/>
    </location>
</feature>
<feature type="region of interest" description="ARM" evidence="22">
    <location>
        <begin position="56"/>
        <end position="73"/>
    </location>
</feature>
<feature type="region of interest" description="RuvC-II" evidence="22">
    <location>
        <begin position="718"/>
        <end position="765"/>
    </location>
</feature>
<feature type="region of interest" description="RuvC-III" evidence="22">
    <location>
        <begin position="925"/>
        <end position="1102"/>
    </location>
</feature>
<feature type="region of interest" description="PAM-interacting domain (PI)" evidence="23">
    <location>
        <begin position="1099"/>
        <end position="1368"/>
    </location>
</feature>
<feature type="short sequence motif" description="PAM substrate-binding" evidence="15">
    <location>
        <begin position="1333"/>
        <end position="1335"/>
    </location>
</feature>
<feature type="active site" description="For RuvC-like nuclease domain" evidence="25">
    <location>
        <position position="10"/>
    </location>
</feature>
<feature type="active site" description="Proton acceptor for HNH nuclease domain" evidence="25">
    <location>
        <position position="840"/>
    </location>
</feature>
<feature type="binding site" evidence="13">
    <location>
        <position position="10"/>
    </location>
    <ligand>
        <name>Mn(2+)</name>
        <dbReference type="ChEBI" id="CHEBI:29035"/>
        <label>1</label>
    </ligand>
</feature>
<feature type="binding site" evidence="13">
    <location>
        <position position="10"/>
    </location>
    <ligand>
        <name>Mn(2+)</name>
        <dbReference type="ChEBI" id="CHEBI:29035"/>
        <label>2</label>
    </ligand>
</feature>
<feature type="binding site" evidence="13">
    <location>
        <position position="762"/>
    </location>
    <ligand>
        <name>Mn(2+)</name>
        <dbReference type="ChEBI" id="CHEBI:29035"/>
        <label>1</label>
    </ligand>
</feature>
<feature type="binding site" evidence="13">
    <location>
        <position position="766"/>
    </location>
    <ligand>
        <name>Mn(2+)</name>
        <dbReference type="ChEBI" id="CHEBI:29035"/>
        <label>1</label>
    </ligand>
</feature>
<feature type="binding site" evidence="13">
    <location>
        <position position="766"/>
    </location>
    <ligand>
        <name>Mn(2+)</name>
        <dbReference type="ChEBI" id="CHEBI:29035"/>
        <label>2</label>
    </ligand>
</feature>
<feature type="binding site" evidence="13">
    <location>
        <position position="983"/>
    </location>
    <ligand>
        <name>Mn(2+)</name>
        <dbReference type="ChEBI" id="CHEBI:29035"/>
        <label>2</label>
    </ligand>
</feature>
<feature type="binding site" evidence="13">
    <location>
        <position position="1297"/>
    </location>
    <ligand>
        <name>Mn(2+)</name>
        <dbReference type="ChEBI" id="CHEBI:29035"/>
        <label>3</label>
    </ligand>
</feature>
<feature type="binding site" evidence="13">
    <location>
        <position position="1328"/>
    </location>
    <ligand>
        <name>Mn(2+)</name>
        <dbReference type="ChEBI" id="CHEBI:29035"/>
        <label>3</label>
    </ligand>
</feature>
<feature type="mutagenesis site" description="Target DNA noncomplementary to the crRNA is not cleaved; nickase activity. Processes guide RNAs. In vivo, loss of Cas9-mediated CRISPR interference in plasmid transformation. Able to bind guide RNAs and target DNA but not cleave DNA; when associated with A-840." evidence="4 11 14">
    <original>D</original>
    <variation>A</variation>
    <location>
        <position position="10"/>
    </location>
</feature>
<feature type="mutagenesis site" description="Decreased DNA cleavage." evidence="14">
    <original>S</original>
    <variation>A</variation>
    <location>
        <position position="15"/>
    </location>
</feature>
<feature type="mutagenesis site" description="Significantly decreased DNA cleavage." evidence="14">
    <original>R</original>
    <variation>A</variation>
    <location>
        <position position="66"/>
    </location>
</feature>
<feature type="mutagenesis site" description="No DNA cleavage." evidence="14">
    <original>R</original>
    <variation>A</variation>
    <location>
        <position position="70"/>
    </location>
</feature>
<feature type="mutagenesis site" description="Significantly decreased DNA cleavage." evidence="14">
    <original>R</original>
    <variation>A</variation>
    <location>
        <position position="74"/>
    </location>
</feature>
<feature type="mutagenesis site" description="Moderately decreased DNA cleavage." evidence="14">
    <original>R</original>
    <variation>A</variation>
    <location>
        <position position="78"/>
    </location>
</feature>
<feature type="mutagenesis site" description="No nuclease activity." evidence="14">
    <location>
        <begin position="97"/>
        <end position="150"/>
    </location>
</feature>
<feature type="mutagenesis site" description="Moderately decreased DNA cleavage." evidence="14">
    <original>R</original>
    <variation>A</variation>
    <location>
        <position position="165"/>
    </location>
</feature>
<feature type="mutagenesis site" description="About 50% nuclease activity." evidence="14">
    <location>
        <begin position="175"/>
        <end position="307"/>
    </location>
</feature>
<feature type="mutagenesis site" description="No nuclease activity." evidence="14">
    <location>
        <begin position="312"/>
        <end position="409"/>
    </location>
</feature>
<feature type="mutagenesis site" description="Slight decrease in target DNA cleavage and DNA-binding. Almost complete loss of DNA cleavage and binding; when associated with 1125-A--A-1127." evidence="13">
    <original>PWN</original>
    <variation>AAA</variation>
    <location>
        <begin position="475"/>
        <end position="477"/>
    </location>
</feature>
<feature type="mutagenesis site" description="Only cleaves 1 DNA strand, probably the noncomplementary strand. Processes guide RNAs correctly. In vivo, loss of Cas9-mediated CRISPR interference in plasmid transformation." evidence="11 14">
    <original>E</original>
    <variation>A</variation>
    <location>
        <position position="762"/>
    </location>
</feature>
<feature type="mutagenesis site" description="Target DNA complementary to the crRNA is not cleaved; nickase activity. In vivo, loss of Cas9-mediated CRISPR interference in plasmid transformation. Able to process and bind guide RNAs and target DNA but not cleave DNA; when associated with A-10." evidence="4 11 14 15">
    <original>H</original>
    <variation>A</variation>
    <location>
        <position position="840"/>
    </location>
</feature>
<feature type="mutagenesis site" description="Decreased DNA cleavage. Processes guide RNAs correctly. In vivo, retains Cas9-mediated CRISPR interference in plasmid transformation." evidence="11 14">
    <original>N</original>
    <variation>A</variation>
    <location>
        <position position="854"/>
    </location>
</feature>
<feature type="mutagenesis site" description="Only cleaves 1 DNA strand, probably the complementary strand. Processes guide RNAs correctly. In vivo, loss of Cas9-mediated CRISPR interference in plasmid transformation." evidence="11 14">
    <original>N</original>
    <variation>A</variation>
    <location>
        <position position="863"/>
    </location>
</feature>
<feature type="mutagenesis site" description="Processes guide RNAs correctly." evidence="11">
    <original>HH</original>
    <variation>AA</variation>
    <location>
        <begin position="982"/>
        <end position="983"/>
    </location>
</feature>
<feature type="mutagenesis site" description="Decreased DNA cleavage. In vivo, loss of Cas9-mediated CRISPR interference in plasmid transformation." evidence="14">
    <original>H</original>
    <variation>A</variation>
    <location>
        <position position="982"/>
    </location>
</feature>
<feature type="mutagenesis site" description="Only cleaves 1 DNA strand, probably the noncomplementary strand." evidence="14">
    <original>H</original>
    <variation>A</variation>
    <location>
        <position position="983"/>
    </location>
</feature>
<feature type="mutagenesis site" description="Only cleaves 1 DNA strand, probably the noncomplementary strand. Processes guide RNAs correctly. In vivo, loss of Cas9-mediated CRISPR interference in plasmid transformation." evidence="11 14">
    <original>D</original>
    <variation>A</variation>
    <location>
        <position position="986"/>
    </location>
</feature>
<feature type="mutagenesis site" description="No nuclease activity." evidence="14">
    <location>
        <begin position="1099"/>
        <end position="1368"/>
    </location>
</feature>
<feature type="mutagenesis site" description="No change in target DNA cleavage, slight decrease in DNA-binding. Almost complete loss of DNA cleavage and binding; when associated with 475-A--A-477." evidence="13">
    <original>DWD</original>
    <variation>AAA</variation>
    <location>
        <begin position="1125"/>
        <end position="1127"/>
    </location>
</feature>
<feature type="mutagenesis site" description="Probably inactivates protein." evidence="8">
    <original>G</original>
    <variation>C</variation>
    <location>
        <position position="1132"/>
    </location>
</feature>
<feature type="mutagenesis site" description="Nearly complete loss of target DNA cleavage." evidence="15">
    <original>RKR</original>
    <variation>AKA</variation>
    <location>
        <begin position="1333"/>
        <end position="1335"/>
    </location>
</feature>
<feature type="mutagenesis site" description="Dramatically reduced target DNA binding, slightly decreased target cleavage." evidence="15">
    <original>R</original>
    <variation>A</variation>
    <location>
        <position position="1333"/>
    </location>
</feature>
<feature type="mutagenesis site" description="Dramatically reduced target DNA binding, slightly decreased target cleavage." evidence="15">
    <original>R</original>
    <variation>A</variation>
    <location>
        <position position="1335"/>
    </location>
</feature>
<feature type="strand" evidence="28">
    <location>
        <begin position="6"/>
        <end position="11"/>
    </location>
</feature>
<feature type="strand" evidence="28">
    <location>
        <begin position="13"/>
        <end position="21"/>
    </location>
</feature>
<feature type="helix" evidence="44">
    <location>
        <begin position="23"/>
        <end position="25"/>
    </location>
</feature>
<feature type="strand" evidence="28">
    <location>
        <begin position="29"/>
        <end position="39"/>
    </location>
</feature>
<feature type="strand" evidence="28">
    <location>
        <begin position="42"/>
        <end position="52"/>
    </location>
</feature>
<feature type="strand" evidence="44">
    <location>
        <begin position="56"/>
        <end position="58"/>
    </location>
</feature>
<feature type="helix" evidence="28">
    <location>
        <begin position="60"/>
        <end position="93"/>
    </location>
</feature>
<feature type="helix" evidence="28">
    <location>
        <begin position="97"/>
        <end position="102"/>
    </location>
</feature>
<feature type="turn" evidence="28">
    <location>
        <begin position="103"/>
        <end position="105"/>
    </location>
</feature>
<feature type="helix" evidence="28">
    <location>
        <begin position="108"/>
        <end position="110"/>
    </location>
</feature>
<feature type="turn" evidence="28">
    <location>
        <begin position="117"/>
        <end position="119"/>
    </location>
</feature>
<feature type="helix" evidence="28">
    <location>
        <begin position="122"/>
        <end position="131"/>
    </location>
</feature>
<feature type="helix" evidence="28">
    <location>
        <begin position="135"/>
        <end position="144"/>
    </location>
</feature>
<feature type="helix" evidence="28">
    <location>
        <begin position="151"/>
        <end position="163"/>
    </location>
</feature>
<feature type="helix" evidence="39">
    <location>
        <begin position="177"/>
        <end position="179"/>
    </location>
</feature>
<feature type="helix" evidence="43">
    <location>
        <begin position="182"/>
        <end position="184"/>
    </location>
</feature>
<feature type="helix" evidence="28">
    <location>
        <begin position="185"/>
        <end position="195"/>
    </location>
</feature>
<feature type="turn" evidence="28">
    <location>
        <begin position="196"/>
        <end position="198"/>
    </location>
</feature>
<feature type="strand" evidence="34">
    <location>
        <begin position="205"/>
        <end position="207"/>
    </location>
</feature>
<feature type="helix" evidence="28">
    <location>
        <begin position="208"/>
        <end position="212"/>
    </location>
</feature>
<feature type="strand" evidence="28">
    <location>
        <begin position="214"/>
        <end position="216"/>
    </location>
</feature>
<feature type="helix" evidence="28">
    <location>
        <begin position="218"/>
        <end position="227"/>
    </location>
</feature>
<feature type="strand" evidence="37">
    <location>
        <begin position="229"/>
        <end position="231"/>
    </location>
</feature>
<feature type="strand" evidence="35">
    <location>
        <begin position="234"/>
        <end position="236"/>
    </location>
</feature>
<feature type="helix" evidence="28">
    <location>
        <begin position="237"/>
        <end position="246"/>
    </location>
</feature>
<feature type="turn" evidence="28">
    <location>
        <begin position="253"/>
        <end position="257"/>
    </location>
</feature>
<feature type="strand" evidence="48">
    <location>
        <begin position="258"/>
        <end position="260"/>
    </location>
</feature>
<feature type="strand" evidence="29">
    <location>
        <begin position="266"/>
        <end position="268"/>
    </location>
</feature>
<feature type="helix" evidence="28">
    <location>
        <begin position="271"/>
        <end position="282"/>
    </location>
</feature>
<feature type="helix" evidence="28">
    <location>
        <begin position="284"/>
        <end position="286"/>
    </location>
</feature>
<feature type="helix" evidence="28">
    <location>
        <begin position="287"/>
        <end position="299"/>
    </location>
</feature>
<feature type="turn" evidence="28">
    <location>
        <begin position="300"/>
        <end position="305"/>
    </location>
</feature>
<feature type="strand" evidence="47">
    <location>
        <begin position="306"/>
        <end position="308"/>
    </location>
</feature>
<feature type="turn" evidence="38">
    <location>
        <begin position="310"/>
        <end position="312"/>
    </location>
</feature>
<feature type="helix" evidence="28">
    <location>
        <begin position="316"/>
        <end position="342"/>
    </location>
</feature>
<feature type="helix" evidence="28">
    <location>
        <begin position="345"/>
        <end position="351"/>
    </location>
</feature>
<feature type="strand" evidence="28">
    <location>
        <begin position="356"/>
        <end position="358"/>
    </location>
</feature>
<feature type="helix" evidence="28">
    <location>
        <begin position="359"/>
        <end position="363"/>
    </location>
</feature>
<feature type="strand" evidence="48">
    <location>
        <begin position="364"/>
        <end position="366"/>
    </location>
</feature>
<feature type="helix" evidence="28">
    <location>
        <begin position="369"/>
        <end position="382"/>
    </location>
</feature>
<feature type="strand" evidence="28">
    <location>
        <begin position="383"/>
        <end position="385"/>
    </location>
</feature>
<feature type="helix" evidence="28">
    <location>
        <begin position="387"/>
        <end position="394"/>
    </location>
</feature>
<feature type="strand" evidence="31">
    <location>
        <begin position="402"/>
        <end position="404"/>
    </location>
</feature>
<feature type="helix" evidence="28">
    <location>
        <begin position="405"/>
        <end position="409"/>
    </location>
</feature>
<feature type="helix" evidence="28">
    <location>
        <begin position="412"/>
        <end position="426"/>
    </location>
</feature>
<feature type="turn" evidence="28">
    <location>
        <begin position="427"/>
        <end position="429"/>
    </location>
</feature>
<feature type="helix" evidence="28">
    <location>
        <begin position="431"/>
        <end position="435"/>
    </location>
</feature>
<feature type="helix" evidence="28">
    <location>
        <begin position="437"/>
        <end position="445"/>
    </location>
</feature>
<feature type="turn" evidence="28">
    <location>
        <begin position="450"/>
        <end position="452"/>
    </location>
</feature>
<feature type="helix" evidence="44">
    <location>
        <begin position="453"/>
        <end position="455"/>
    </location>
</feature>
<feature type="strand" evidence="48">
    <location>
        <begin position="460"/>
        <end position="462"/>
    </location>
</feature>
<feature type="strand" evidence="28">
    <location>
        <begin position="467"/>
        <end position="471"/>
    </location>
</feature>
<feature type="turn" evidence="28">
    <location>
        <begin position="475"/>
        <end position="477"/>
    </location>
</feature>
<feature type="helix" evidence="28">
    <location>
        <begin position="478"/>
        <end position="481"/>
    </location>
</feature>
<feature type="helix" evidence="28">
    <location>
        <begin position="484"/>
        <end position="493"/>
    </location>
</feature>
<feature type="strand" evidence="28">
    <location>
        <begin position="500"/>
        <end position="502"/>
    </location>
</feature>
<feature type="strand" evidence="40">
    <location>
        <begin position="505"/>
        <end position="509"/>
    </location>
</feature>
<feature type="helix" evidence="28">
    <location>
        <begin position="513"/>
        <end position="524"/>
    </location>
</feature>
<feature type="strand" evidence="28">
    <location>
        <begin position="528"/>
        <end position="530"/>
    </location>
</feature>
<feature type="strand" evidence="46">
    <location>
        <begin position="532"/>
        <end position="536"/>
    </location>
</feature>
<feature type="helix" evidence="28">
    <location>
        <begin position="542"/>
        <end position="551"/>
    </location>
</feature>
<feature type="turn" evidence="28">
    <location>
        <begin position="552"/>
        <end position="555"/>
    </location>
</feature>
<feature type="strand" evidence="30">
    <location>
        <begin position="556"/>
        <end position="558"/>
    </location>
</feature>
<feature type="helix" evidence="28">
    <location>
        <begin position="561"/>
        <end position="567"/>
    </location>
</feature>
<feature type="turn" evidence="28">
    <location>
        <begin position="568"/>
        <end position="573"/>
    </location>
</feature>
<feature type="helix" evidence="42">
    <location>
        <begin position="574"/>
        <end position="576"/>
    </location>
</feature>
<feature type="strand" evidence="28">
    <location>
        <begin position="579"/>
        <end position="582"/>
    </location>
</feature>
<feature type="strand" evidence="29">
    <location>
        <begin position="584"/>
        <end position="586"/>
    </location>
</feature>
<feature type="helix" evidence="28">
    <location>
        <begin position="592"/>
        <end position="601"/>
    </location>
</feature>
<feature type="helix" evidence="28">
    <location>
        <begin position="604"/>
        <end position="608"/>
    </location>
</feature>
<feature type="helix" evidence="28">
    <location>
        <begin position="610"/>
        <end position="612"/>
    </location>
</feature>
<feature type="helix" evidence="28">
    <location>
        <begin position="613"/>
        <end position="625"/>
    </location>
</feature>
<feature type="helix" evidence="28">
    <location>
        <begin position="629"/>
        <end position="636"/>
    </location>
</feature>
<feature type="helix" evidence="28">
    <location>
        <begin position="637"/>
        <end position="642"/>
    </location>
</feature>
<feature type="helix" evidence="28">
    <location>
        <begin position="645"/>
        <end position="652"/>
    </location>
</feature>
<feature type="strand" evidence="40">
    <location>
        <begin position="659"/>
        <end position="663"/>
    </location>
</feature>
<feature type="helix" evidence="28">
    <location>
        <begin position="664"/>
        <end position="668"/>
    </location>
</feature>
<feature type="turn" evidence="28">
    <location>
        <begin position="673"/>
        <end position="675"/>
    </location>
</feature>
<feature type="helix" evidence="28">
    <location>
        <begin position="679"/>
        <end position="684"/>
    </location>
</feature>
<feature type="turn" evidence="28">
    <location>
        <begin position="687"/>
        <end position="689"/>
    </location>
</feature>
<feature type="helix" evidence="28">
    <location>
        <begin position="693"/>
        <end position="698"/>
    </location>
</feature>
<feature type="strand" evidence="30">
    <location>
        <begin position="700"/>
        <end position="703"/>
    </location>
</feature>
<feature type="helix" evidence="28">
    <location>
        <begin position="704"/>
        <end position="711"/>
    </location>
</feature>
<feature type="turn" evidence="45">
    <location>
        <begin position="714"/>
        <end position="716"/>
    </location>
</feature>
<feature type="helix" evidence="28">
    <location>
        <begin position="720"/>
        <end position="725"/>
    </location>
</feature>
<feature type="strand" evidence="28">
    <location>
        <begin position="727"/>
        <end position="729"/>
    </location>
</feature>
<feature type="helix" evidence="28">
    <location>
        <begin position="731"/>
        <end position="750"/>
    </location>
</feature>
<feature type="turn" evidence="28">
    <location>
        <begin position="751"/>
        <end position="753"/>
    </location>
</feature>
<feature type="strand" evidence="28">
    <location>
        <begin position="757"/>
        <end position="763"/>
    </location>
</feature>
<feature type="strand" evidence="41">
    <location>
        <begin position="770"/>
        <end position="772"/>
    </location>
</feature>
<feature type="helix" evidence="36">
    <location>
        <begin position="777"/>
        <end position="791"/>
    </location>
</feature>
<feature type="helix" evidence="36">
    <location>
        <begin position="795"/>
        <end position="798"/>
    </location>
</feature>
<feature type="helix" evidence="36">
    <location>
        <begin position="803"/>
        <end position="807"/>
    </location>
</feature>
<feature type="helix" evidence="36">
    <location>
        <begin position="809"/>
        <end position="816"/>
    </location>
</feature>
<feature type="turn" evidence="36">
    <location>
        <begin position="817"/>
        <end position="819"/>
    </location>
</feature>
<feature type="strand" evidence="36">
    <location>
        <begin position="822"/>
        <end position="827"/>
    </location>
</feature>
<feature type="helix" evidence="36">
    <location>
        <begin position="830"/>
        <end position="835"/>
    </location>
</feature>
<feature type="strand" evidence="36">
    <location>
        <begin position="836"/>
        <end position="842"/>
    </location>
</feature>
<feature type="turn" evidence="36">
    <location>
        <begin position="844"/>
        <end position="846"/>
    </location>
</feature>
<feature type="helix" evidence="36">
    <location>
        <begin position="852"/>
        <end position="854"/>
    </location>
</feature>
<feature type="strand" evidence="36">
    <location>
        <begin position="855"/>
        <end position="859"/>
    </location>
</feature>
<feature type="helix" evidence="36">
    <location>
        <begin position="861"/>
        <end position="864"/>
    </location>
</feature>
<feature type="strand" evidence="36">
    <location>
        <begin position="867"/>
        <end position="871"/>
    </location>
</feature>
<feature type="helix" evidence="36">
    <location>
        <begin position="873"/>
        <end position="888"/>
    </location>
</feature>
<feature type="helix" evidence="36">
    <location>
        <begin position="894"/>
        <end position="900"/>
    </location>
</feature>
<feature type="helix" evidence="36">
    <location>
        <begin position="902"/>
        <end position="905"/>
    </location>
</feature>
<feature type="helix" evidence="28">
    <location>
        <begin position="910"/>
        <end position="921"/>
    </location>
</feature>
<feature type="helix" evidence="28">
    <location>
        <begin position="926"/>
        <end position="939"/>
    </location>
</feature>
<feature type="strand" evidence="41">
    <location>
        <begin position="945"/>
        <end position="947"/>
    </location>
</feature>
<feature type="strand" evidence="28">
    <location>
        <begin position="953"/>
        <end position="957"/>
    </location>
</feature>
<feature type="helix" evidence="28">
    <location>
        <begin position="960"/>
        <end position="969"/>
    </location>
</feature>
<feature type="helix" evidence="29">
    <location>
        <begin position="976"/>
        <end position="978"/>
    </location>
</feature>
<feature type="helix" evidence="28">
    <location>
        <begin position="981"/>
        <end position="1000"/>
    </location>
</feature>
<feature type="helix" evidence="28">
    <location>
        <begin position="1002"/>
        <end position="1004"/>
    </location>
</feature>
<feature type="helix" evidence="28">
    <location>
        <begin position="1005"/>
        <end position="1008"/>
    </location>
</feature>
<feature type="strand" evidence="45">
    <location>
        <begin position="1009"/>
        <end position="1011"/>
    </location>
</feature>
<feature type="helix" evidence="31">
    <location>
        <begin position="1018"/>
        <end position="1021"/>
    </location>
</feature>
<feature type="strand" evidence="41">
    <location>
        <begin position="1024"/>
        <end position="1029"/>
    </location>
</feature>
<feature type="helix" evidence="28">
    <location>
        <begin position="1032"/>
        <end position="1040"/>
    </location>
</feature>
<feature type="helix" evidence="28">
    <location>
        <begin position="1042"/>
        <end position="1046"/>
    </location>
</feature>
<feature type="strand" evidence="28">
    <location>
        <begin position="1048"/>
        <end position="1051"/>
    </location>
</feature>
<feature type="strand" evidence="41">
    <location>
        <begin position="1053"/>
        <end position="1055"/>
    </location>
</feature>
<feature type="strand" evidence="28">
    <location>
        <begin position="1057"/>
        <end position="1059"/>
    </location>
</feature>
<feature type="strand" evidence="28">
    <location>
        <begin position="1062"/>
        <end position="1065"/>
    </location>
</feature>
<feature type="turn" evidence="28">
    <location>
        <begin position="1067"/>
        <end position="1069"/>
    </location>
</feature>
<feature type="strand" evidence="28">
    <location>
        <begin position="1072"/>
        <end position="1075"/>
    </location>
</feature>
<feature type="turn" evidence="28">
    <location>
        <begin position="1076"/>
        <end position="1078"/>
    </location>
</feature>
<feature type="helix" evidence="28">
    <location>
        <begin position="1079"/>
        <end position="1087"/>
    </location>
</feature>
<feature type="strand" evidence="28">
    <location>
        <begin position="1093"/>
        <end position="1096"/>
    </location>
</feature>
<feature type="strand" evidence="32">
    <location>
        <begin position="1105"/>
        <end position="1111"/>
    </location>
</feature>
<feature type="strand" evidence="26">
    <location>
        <begin position="1115"/>
        <end position="1117"/>
    </location>
</feature>
<feature type="strand" evidence="27">
    <location>
        <begin position="1120"/>
        <end position="1123"/>
    </location>
</feature>
<feature type="helix" evidence="28">
    <location>
        <begin position="1128"/>
        <end position="1131"/>
    </location>
</feature>
<feature type="strand" evidence="32">
    <location>
        <begin position="1133"/>
        <end position="1137"/>
    </location>
</feature>
<feature type="strand" evidence="28">
    <location>
        <begin position="1139"/>
        <end position="1151"/>
    </location>
</feature>
<feature type="turn" evidence="28">
    <location>
        <begin position="1152"/>
        <end position="1155"/>
    </location>
</feature>
<feature type="strand" evidence="28">
    <location>
        <begin position="1156"/>
        <end position="1167"/>
    </location>
</feature>
<feature type="turn" evidence="28">
    <location>
        <begin position="1168"/>
        <end position="1170"/>
    </location>
</feature>
<feature type="helix" evidence="28">
    <location>
        <begin position="1171"/>
        <end position="1176"/>
    </location>
</feature>
<feature type="helix" evidence="28">
    <location>
        <begin position="1178"/>
        <end position="1185"/>
    </location>
</feature>
<feature type="strand" evidence="29">
    <location>
        <begin position="1187"/>
        <end position="1189"/>
    </location>
</feature>
<feature type="helix" evidence="28">
    <location>
        <begin position="1192"/>
        <end position="1194"/>
    </location>
</feature>
<feature type="strand" evidence="28">
    <location>
        <begin position="1196"/>
        <end position="1198"/>
    </location>
</feature>
<feature type="strand" evidence="28">
    <location>
        <begin position="1203"/>
        <end position="1205"/>
    </location>
</feature>
<feature type="helix" evidence="28">
    <location>
        <begin position="1207"/>
        <end position="1209"/>
    </location>
</feature>
<feature type="strand" evidence="28">
    <location>
        <begin position="1211"/>
        <end position="1218"/>
    </location>
</feature>
<feature type="strand" evidence="28">
    <location>
        <begin position="1220"/>
        <end position="1222"/>
    </location>
</feature>
<feature type="helix" evidence="28">
    <location>
        <begin position="1230"/>
        <end position="1240"/>
    </location>
</feature>
<feature type="strand" evidence="31">
    <location>
        <begin position="1242"/>
        <end position="1244"/>
    </location>
</feature>
<feature type="turn" evidence="48">
    <location>
        <begin position="1248"/>
        <end position="1250"/>
    </location>
</feature>
<feature type="helix" evidence="28">
    <location>
        <begin position="1251"/>
        <end position="1261"/>
    </location>
</feature>
<feature type="turn" evidence="28">
    <location>
        <begin position="1262"/>
        <end position="1264"/>
    </location>
</feature>
<feature type="helix" evidence="28">
    <location>
        <begin position="1265"/>
        <end position="1280"/>
    </location>
</feature>
<feature type="helix" evidence="28">
    <location>
        <begin position="1284"/>
        <end position="1296"/>
    </location>
</feature>
<feature type="turn" evidence="28">
    <location>
        <begin position="1297"/>
        <end position="1299"/>
    </location>
</feature>
<feature type="helix" evidence="28">
    <location>
        <begin position="1302"/>
        <end position="1316"/>
    </location>
</feature>
<feature type="strand" evidence="28">
    <location>
        <begin position="1317"/>
        <end position="1320"/>
    </location>
</feature>
<feature type="strand" evidence="28">
    <location>
        <begin position="1324"/>
        <end position="1326"/>
    </location>
</feature>
<feature type="strand" evidence="28">
    <location>
        <begin position="1329"/>
        <end position="1331"/>
    </location>
</feature>
<feature type="strand" evidence="33">
    <location>
        <begin position="1334"/>
        <end position="1336"/>
    </location>
</feature>
<feature type="helix" evidence="28">
    <location>
        <begin position="1340"/>
        <end position="1344"/>
    </location>
</feature>
<feature type="strand" evidence="28">
    <location>
        <begin position="1345"/>
        <end position="1350"/>
    </location>
</feature>
<feature type="strand" evidence="27">
    <location>
        <begin position="1352"/>
        <end position="1354"/>
    </location>
</feature>
<feature type="strand" evidence="28">
    <location>
        <begin position="1356"/>
        <end position="1361"/>
    </location>
</feature>
<feature type="helix" evidence="28">
    <location>
        <begin position="1362"/>
        <end position="1364"/>
    </location>
</feature>
<evidence type="ECO:0000255" key="1">
    <source>
        <dbReference type="HAMAP-Rule" id="MF_01480"/>
    </source>
</evidence>
<evidence type="ECO:0000255" key="2">
    <source>
        <dbReference type="PROSITE-ProRule" id="PRU01085"/>
    </source>
</evidence>
<evidence type="ECO:0000269" key="3">
    <source>
    </source>
</evidence>
<evidence type="ECO:0000269" key="4">
    <source>
    </source>
</evidence>
<evidence type="ECO:0000269" key="5">
    <source>
    </source>
</evidence>
<evidence type="ECO:0000269" key="6">
    <source>
    </source>
</evidence>
<evidence type="ECO:0000269" key="7">
    <source>
    </source>
</evidence>
<evidence type="ECO:0000269" key="8">
    <source>
    </source>
</evidence>
<evidence type="ECO:0000269" key="9">
    <source>
    </source>
</evidence>
<evidence type="ECO:0000269" key="10">
    <source>
    </source>
</evidence>
<evidence type="ECO:0000269" key="11">
    <source>
    </source>
</evidence>
<evidence type="ECO:0000269" key="12">
    <source>
    </source>
</evidence>
<evidence type="ECO:0000269" key="13">
    <source>
    </source>
</evidence>
<evidence type="ECO:0000269" key="14">
    <source>
    </source>
</evidence>
<evidence type="ECO:0000269" key="15">
    <source>
    </source>
</evidence>
<evidence type="ECO:0000269" key="16">
    <source>
    </source>
</evidence>
<evidence type="ECO:0000269" key="17">
    <source>
    </source>
</evidence>
<evidence type="ECO:0000269" key="18">
    <source>
    </source>
</evidence>
<evidence type="ECO:0000303" key="19">
    <source>
    </source>
</evidence>
<evidence type="ECO:0000303" key="20">
    <source>
    </source>
</evidence>
<evidence type="ECO:0000303" key="21">
    <source>
    </source>
</evidence>
<evidence type="ECO:0000303" key="22">
    <source>
    </source>
</evidence>
<evidence type="ECO:0000303" key="23">
    <source>
    </source>
</evidence>
<evidence type="ECO:0000305" key="24"/>
<evidence type="ECO:0000305" key="25">
    <source>
    </source>
</evidence>
<evidence type="ECO:0007829" key="26">
    <source>
        <dbReference type="PDB" id="4OO8"/>
    </source>
</evidence>
<evidence type="ECO:0007829" key="27">
    <source>
        <dbReference type="PDB" id="4UN4"/>
    </source>
</evidence>
<evidence type="ECO:0007829" key="28">
    <source>
        <dbReference type="PDB" id="5B2R"/>
    </source>
</evidence>
<evidence type="ECO:0007829" key="29">
    <source>
        <dbReference type="PDB" id="5FQ5"/>
    </source>
</evidence>
<evidence type="ECO:0007829" key="30">
    <source>
        <dbReference type="PDB" id="5FW1"/>
    </source>
</evidence>
<evidence type="ECO:0007829" key="31">
    <source>
        <dbReference type="PDB" id="5VW1"/>
    </source>
</evidence>
<evidence type="ECO:0007829" key="32">
    <source>
        <dbReference type="PDB" id="6AEG"/>
    </source>
</evidence>
<evidence type="ECO:0007829" key="33">
    <source>
        <dbReference type="PDB" id="6IFO"/>
    </source>
</evidence>
<evidence type="ECO:0007829" key="34">
    <source>
        <dbReference type="PDB" id="6K4S"/>
    </source>
</evidence>
<evidence type="ECO:0007829" key="35">
    <source>
        <dbReference type="PDB" id="6K57"/>
    </source>
</evidence>
<evidence type="ECO:0007829" key="36">
    <source>
        <dbReference type="PDB" id="6O56"/>
    </source>
</evidence>
<evidence type="ECO:0007829" key="37">
    <source>
        <dbReference type="PDB" id="7OX9"/>
    </source>
</evidence>
<evidence type="ECO:0007829" key="38">
    <source>
        <dbReference type="PDB" id="7OXA"/>
    </source>
</evidence>
<evidence type="ECO:0007829" key="39">
    <source>
        <dbReference type="PDB" id="7QQV"/>
    </source>
</evidence>
<evidence type="ECO:0007829" key="40">
    <source>
        <dbReference type="PDB" id="7QQZ"/>
    </source>
</evidence>
<evidence type="ECO:0007829" key="41">
    <source>
        <dbReference type="PDB" id="7S3H"/>
    </source>
</evidence>
<evidence type="ECO:0007829" key="42">
    <source>
        <dbReference type="PDB" id="7S4V"/>
    </source>
</evidence>
<evidence type="ECO:0007829" key="43">
    <source>
        <dbReference type="PDB" id="7S4X"/>
    </source>
</evidence>
<evidence type="ECO:0007829" key="44">
    <source>
        <dbReference type="PDB" id="7VK9"/>
    </source>
</evidence>
<evidence type="ECO:0007829" key="45">
    <source>
        <dbReference type="PDB" id="7Z4L"/>
    </source>
</evidence>
<evidence type="ECO:0007829" key="46">
    <source>
        <dbReference type="PDB" id="8SRS"/>
    </source>
</evidence>
<evidence type="ECO:0007829" key="47">
    <source>
        <dbReference type="PDB" id="8T76"/>
    </source>
</evidence>
<evidence type="ECO:0007829" key="48">
    <source>
        <dbReference type="PDB" id="9CGU"/>
    </source>
</evidence>